<organism>
    <name type="scientific">Arabidopsis thaliana</name>
    <name type="common">Mouse-ear cress</name>
    <dbReference type="NCBI Taxonomy" id="3702"/>
    <lineage>
        <taxon>Eukaryota</taxon>
        <taxon>Viridiplantae</taxon>
        <taxon>Streptophyta</taxon>
        <taxon>Embryophyta</taxon>
        <taxon>Tracheophyta</taxon>
        <taxon>Spermatophyta</taxon>
        <taxon>Magnoliopsida</taxon>
        <taxon>eudicotyledons</taxon>
        <taxon>Gunneridae</taxon>
        <taxon>Pentapetalae</taxon>
        <taxon>rosids</taxon>
        <taxon>malvids</taxon>
        <taxon>Brassicales</taxon>
        <taxon>Brassicaceae</taxon>
        <taxon>Camelineae</taxon>
        <taxon>Arabidopsis</taxon>
    </lineage>
</organism>
<accession>Q4PSA3</accession>
<accession>Q9LVB1</accession>
<protein>
    <recommendedName>
        <fullName>65-kDa microtubule-associated protein 9</fullName>
        <shortName>AtMAP65-9</shortName>
    </recommendedName>
</protein>
<proteinExistence type="evidence at transcript level"/>
<comment type="subunit">
    <text evidence="1">Forms dimer. Binds to microtubules (MT) (By similarity).</text>
</comment>
<comment type="subcellular location">
    <subcellularLocation>
        <location evidence="1">Nucleus</location>
    </subcellularLocation>
    <subcellularLocation>
        <location evidence="1">Cytoplasm</location>
    </subcellularLocation>
    <subcellularLocation>
        <location evidence="1">Cytoplasm</location>
        <location evidence="1">Cytoskeleton</location>
        <location evidence="1">Spindle pole</location>
    </subcellularLocation>
</comment>
<comment type="similarity">
    <text evidence="5">Belongs to the MAP65/ASE1 family.</text>
</comment>
<comment type="sequence caution" evidence="5">
    <conflict type="erroneous gene model prediction">
        <sequence resource="EMBL-CDS" id="BAA97189"/>
    </conflict>
</comment>
<reference key="1">
    <citation type="journal article" date="2000" name="DNA Res.">
        <title>Structural analysis of Arabidopsis thaliana chromosome 5. X. Sequence features of the regions of 3,076,755 bp covered by sixty P1 and TAC clones.</title>
        <authorList>
            <person name="Sato S."/>
            <person name="Nakamura Y."/>
            <person name="Kaneko T."/>
            <person name="Katoh T."/>
            <person name="Asamizu E."/>
            <person name="Kotani H."/>
            <person name="Tabata S."/>
        </authorList>
    </citation>
    <scope>NUCLEOTIDE SEQUENCE [LARGE SCALE GENOMIC DNA]</scope>
    <source>
        <strain>cv. Columbia</strain>
    </source>
</reference>
<reference key="2">
    <citation type="journal article" date="2017" name="Plant J.">
        <title>Araport11: a complete reannotation of the Arabidopsis thaliana reference genome.</title>
        <authorList>
            <person name="Cheng C.Y."/>
            <person name="Krishnakumar V."/>
            <person name="Chan A.P."/>
            <person name="Thibaud-Nissen F."/>
            <person name="Schobel S."/>
            <person name="Town C.D."/>
        </authorList>
    </citation>
    <scope>GENOME REANNOTATION</scope>
    <source>
        <strain>cv. Columbia</strain>
    </source>
</reference>
<reference key="3">
    <citation type="submission" date="2005-05" db="EMBL/GenBank/DDBJ databases">
        <authorList>
            <person name="Underwood B.A."/>
            <person name="Xiao Y.-L."/>
            <person name="Moskal W.A. Jr."/>
            <person name="Monaghan E.L."/>
            <person name="Wang W."/>
            <person name="Redman J.C."/>
            <person name="Wu H.C."/>
            <person name="Utterback T."/>
            <person name="Town C.D."/>
        </authorList>
    </citation>
    <scope>NUCLEOTIDE SEQUENCE [LARGE SCALE MRNA]</scope>
    <source>
        <strain>cv. Columbia</strain>
    </source>
</reference>
<reference key="4">
    <citation type="journal article" date="2002" name="Plant Mol. Biol.">
        <title>The plant cytoskeleton: recent advances in the study of the plant microtubule-associated proteins MAP-65, MAP-190 and the Xenopus MAP215-like protein, MOR1.</title>
        <authorList>
            <person name="Hussey P.J."/>
            <person name="Hawkins T.J."/>
            <person name="Igarashi H."/>
            <person name="Kaloriti D."/>
            <person name="Smertenko A."/>
        </authorList>
    </citation>
    <scope>GENE FAMILY</scope>
    <scope>NOMENCLATURE</scope>
</reference>
<sequence>MSKSQIESTWSSLLQELEIIWKEVGETETEREKILIEIEEECREVYNRKIEKVKEEKIRIKQEIADSEARVIDICSVMEEPPILGRHHQSDQQSGNGRSLKDELVKILQKLEEMEKRKSERKIQFIQVIDDIRCVREEINGESDDETCSSDFSADESDLSLRKLEELHRELYTLQEQKRNRVKQIQDNIRTLESLCSVLGLNFRETVTKIHPSLVDTEGSRSISNETLDKLASSVQQWHETKIQRMQELQDLVTTMLEFWNLMDTPAEEQQKFMDVSCNIAATVSEITKPNSLSIDLLEEVKAELCRLEELKWSKMKELVLKKRSELEEICRRTHIVLEEEDIAVENVIKAIESGDVNPENILEQIEYRAGKVKEEALSRKEILEKADKWLNACEEENWLEEYNQDENRYNAGKGSHLILKRAEKARALVNKLPAMVEALASKITIWESEKEYEFLFDGNRLLSMLEEYTELREEKEQERRRKRDLKKHQGQVTSEQDKGSVTKPQSAKKGLKVSTNKRFVSSPHTPQTDSPHSAKSNQSFSTPLSRHG</sequence>
<evidence type="ECO:0000250" key="1"/>
<evidence type="ECO:0000250" key="2">
    <source>
        <dbReference type="UniProtKB" id="Q9FLP0"/>
    </source>
</evidence>
<evidence type="ECO:0000255" key="3"/>
<evidence type="ECO:0000256" key="4">
    <source>
        <dbReference type="SAM" id="MobiDB-lite"/>
    </source>
</evidence>
<evidence type="ECO:0000305" key="5"/>
<dbReference type="EMBL" id="AB019235">
    <property type="protein sequence ID" value="BAA97189.1"/>
    <property type="status" value="ALT_SEQ"/>
    <property type="molecule type" value="Genomic_DNA"/>
</dbReference>
<dbReference type="EMBL" id="CP002688">
    <property type="protein sequence ID" value="AED97586.1"/>
    <property type="molecule type" value="Genomic_DNA"/>
</dbReference>
<dbReference type="EMBL" id="CP002688">
    <property type="protein sequence ID" value="ANM68950.1"/>
    <property type="molecule type" value="Genomic_DNA"/>
</dbReference>
<dbReference type="EMBL" id="DQ056733">
    <property type="protein sequence ID" value="AAY78877.1"/>
    <property type="molecule type" value="mRNA"/>
</dbReference>
<dbReference type="RefSeq" id="NP_001318863.1">
    <property type="nucleotide sequence ID" value="NM_001345543.1"/>
</dbReference>
<dbReference type="RefSeq" id="NP_201031.1">
    <property type="nucleotide sequence ID" value="NM_125619.2"/>
</dbReference>
<dbReference type="SMR" id="Q4PSA3"/>
<dbReference type="FunCoup" id="Q4PSA3">
    <property type="interactions" value="1554"/>
</dbReference>
<dbReference type="STRING" id="3702.Q4PSA3"/>
<dbReference type="iPTMnet" id="Q4PSA3"/>
<dbReference type="PaxDb" id="3702-AT5G62250.1"/>
<dbReference type="ProteomicsDB" id="238278"/>
<dbReference type="EnsemblPlants" id="AT5G62250.1">
    <property type="protein sequence ID" value="AT5G62250.1"/>
    <property type="gene ID" value="AT5G62250"/>
</dbReference>
<dbReference type="EnsemblPlants" id="AT5G62250.2">
    <property type="protein sequence ID" value="AT5G62250.2"/>
    <property type="gene ID" value="AT5G62250"/>
</dbReference>
<dbReference type="GeneID" id="836346"/>
<dbReference type="Gramene" id="AT5G62250.1">
    <property type="protein sequence ID" value="AT5G62250.1"/>
    <property type="gene ID" value="AT5G62250"/>
</dbReference>
<dbReference type="Gramene" id="AT5G62250.2">
    <property type="protein sequence ID" value="AT5G62250.2"/>
    <property type="gene ID" value="AT5G62250"/>
</dbReference>
<dbReference type="KEGG" id="ath:AT5G62250"/>
<dbReference type="Araport" id="AT5G62250"/>
<dbReference type="TAIR" id="AT5G62250">
    <property type="gene designation" value="MAP65-9"/>
</dbReference>
<dbReference type="eggNOG" id="KOG4302">
    <property type="taxonomic scope" value="Eukaryota"/>
</dbReference>
<dbReference type="HOGENOM" id="CLU_011760_1_1_1"/>
<dbReference type="InParanoid" id="Q4PSA3"/>
<dbReference type="OMA" id="IDICSVM"/>
<dbReference type="OrthoDB" id="642895at2759"/>
<dbReference type="PhylomeDB" id="Q4PSA3"/>
<dbReference type="PRO" id="PR:Q4PSA3"/>
<dbReference type="Proteomes" id="UP000006548">
    <property type="component" value="Chromosome 5"/>
</dbReference>
<dbReference type="ExpressionAtlas" id="Q4PSA3">
    <property type="expression patterns" value="baseline and differential"/>
</dbReference>
<dbReference type="GO" id="GO:0005737">
    <property type="term" value="C:cytoplasm"/>
    <property type="evidence" value="ECO:0007669"/>
    <property type="project" value="UniProtKB-SubCell"/>
</dbReference>
<dbReference type="GO" id="GO:0005634">
    <property type="term" value="C:nucleus"/>
    <property type="evidence" value="ECO:0007669"/>
    <property type="project" value="UniProtKB-SubCell"/>
</dbReference>
<dbReference type="GO" id="GO:0000922">
    <property type="term" value="C:spindle pole"/>
    <property type="evidence" value="ECO:0007669"/>
    <property type="project" value="UniProtKB-SubCell"/>
</dbReference>
<dbReference type="GO" id="GO:0008017">
    <property type="term" value="F:microtubule binding"/>
    <property type="evidence" value="ECO:0007669"/>
    <property type="project" value="InterPro"/>
</dbReference>
<dbReference type="GO" id="GO:0000226">
    <property type="term" value="P:microtubule cytoskeleton organization"/>
    <property type="evidence" value="ECO:0007669"/>
    <property type="project" value="InterPro"/>
</dbReference>
<dbReference type="Gene3D" id="1.20.58.1520">
    <property type="match status" value="1"/>
</dbReference>
<dbReference type="InterPro" id="IPR007145">
    <property type="entry name" value="MAP65_Ase1_PRC1"/>
</dbReference>
<dbReference type="PANTHER" id="PTHR19321:SF24">
    <property type="entry name" value="65-KDA MICROTUBULE-ASSOCIATED PROTEIN 9"/>
    <property type="match status" value="1"/>
</dbReference>
<dbReference type="PANTHER" id="PTHR19321">
    <property type="entry name" value="PROTEIN REGULATOR OF CYTOKINESIS 1 PRC1-RELATED"/>
    <property type="match status" value="1"/>
</dbReference>
<dbReference type="Pfam" id="PF03999">
    <property type="entry name" value="MAP65_ASE1"/>
    <property type="match status" value="1"/>
</dbReference>
<feature type="chain" id="PRO_0000395480" description="65-kDa microtubule-associated protein 9">
    <location>
        <begin position="1"/>
        <end position="549"/>
    </location>
</feature>
<feature type="region of interest" description="Disordered" evidence="4">
    <location>
        <begin position="474"/>
        <end position="549"/>
    </location>
</feature>
<feature type="coiled-coil region" evidence="3">
    <location>
        <begin position="36"/>
        <end position="123"/>
    </location>
</feature>
<feature type="coiled-coil region" evidence="3">
    <location>
        <begin position="160"/>
        <end position="199"/>
    </location>
</feature>
<feature type="coiled-coil region" evidence="3">
    <location>
        <begin position="459"/>
        <end position="492"/>
    </location>
</feature>
<feature type="compositionally biased region" description="Basic residues" evidence="4">
    <location>
        <begin position="481"/>
        <end position="490"/>
    </location>
</feature>
<feature type="compositionally biased region" description="Polar residues" evidence="4">
    <location>
        <begin position="514"/>
        <end position="549"/>
    </location>
</feature>
<feature type="site" description="Microtubule binding" evidence="1">
    <location>
        <position position="412"/>
    </location>
</feature>
<feature type="site" description="Microtubule binding" evidence="1">
    <location>
        <position position="423"/>
    </location>
</feature>
<feature type="modified residue" description="Phosphoserine" evidence="2">
    <location>
        <position position="501"/>
    </location>
</feature>
<feature type="modified residue" description="Phosphoserine" evidence="2">
    <location>
        <position position="546"/>
    </location>
</feature>
<gene>
    <name type="primary">MAP65-9</name>
    <name type="ordered locus">At5g62250</name>
    <name type="ORF">MMI9.8</name>
</gene>
<name>MA659_ARATH</name>
<keyword id="KW-0175">Coiled coil</keyword>
<keyword id="KW-0963">Cytoplasm</keyword>
<keyword id="KW-0206">Cytoskeleton</keyword>
<keyword id="KW-0493">Microtubule</keyword>
<keyword id="KW-0539">Nucleus</keyword>
<keyword id="KW-0597">Phosphoprotein</keyword>
<keyword id="KW-1185">Reference proteome</keyword>